<feature type="chain" id="PRO_0000178271" description="dITP/XTP pyrophosphatase">
    <location>
        <begin position="1"/>
        <end position="197"/>
    </location>
</feature>
<feature type="active site" description="Proton acceptor" evidence="1">
    <location>
        <position position="69"/>
    </location>
</feature>
<feature type="binding site" evidence="1">
    <location>
        <begin position="8"/>
        <end position="13"/>
    </location>
    <ligand>
        <name>substrate</name>
    </ligand>
</feature>
<feature type="binding site" evidence="1">
    <location>
        <position position="40"/>
    </location>
    <ligand>
        <name>Mg(2+)</name>
        <dbReference type="ChEBI" id="CHEBI:18420"/>
    </ligand>
</feature>
<feature type="binding site" evidence="1">
    <location>
        <position position="69"/>
    </location>
    <ligand>
        <name>Mg(2+)</name>
        <dbReference type="ChEBI" id="CHEBI:18420"/>
    </ligand>
</feature>
<feature type="binding site" evidence="1">
    <location>
        <position position="70"/>
    </location>
    <ligand>
        <name>substrate</name>
    </ligand>
</feature>
<feature type="binding site" evidence="1">
    <location>
        <begin position="154"/>
        <end position="157"/>
    </location>
    <ligand>
        <name>substrate</name>
    </ligand>
</feature>
<feature type="binding site" evidence="1">
    <location>
        <position position="177"/>
    </location>
    <ligand>
        <name>substrate</name>
    </ligand>
</feature>
<feature type="binding site" evidence="1">
    <location>
        <begin position="182"/>
        <end position="183"/>
    </location>
    <ligand>
        <name>substrate</name>
    </ligand>
</feature>
<gene>
    <name type="ordered locus">YPO0945</name>
    <name type="ordered locus">y3331</name>
    <name type="ordered locus">YP_3497</name>
</gene>
<protein>
    <recommendedName>
        <fullName evidence="1">dITP/XTP pyrophosphatase</fullName>
        <ecNumber evidence="1">3.6.1.66</ecNumber>
    </recommendedName>
    <alternativeName>
        <fullName evidence="1">Non-canonical purine NTP pyrophosphatase</fullName>
    </alternativeName>
    <alternativeName>
        <fullName evidence="1">Non-standard purine NTP pyrophosphatase</fullName>
    </alternativeName>
    <alternativeName>
        <fullName evidence="1">Nucleoside-triphosphate diphosphatase</fullName>
    </alternativeName>
    <alternativeName>
        <fullName evidence="1">Nucleoside-triphosphate pyrophosphatase</fullName>
        <shortName evidence="1">NTPase</shortName>
    </alternativeName>
</protein>
<reference key="1">
    <citation type="journal article" date="2001" name="Nature">
        <title>Genome sequence of Yersinia pestis, the causative agent of plague.</title>
        <authorList>
            <person name="Parkhill J."/>
            <person name="Wren B.W."/>
            <person name="Thomson N.R."/>
            <person name="Titball R.W."/>
            <person name="Holden M.T.G."/>
            <person name="Prentice M.B."/>
            <person name="Sebaihia M."/>
            <person name="James K.D."/>
            <person name="Churcher C.M."/>
            <person name="Mungall K.L."/>
            <person name="Baker S."/>
            <person name="Basham D."/>
            <person name="Bentley S.D."/>
            <person name="Brooks K."/>
            <person name="Cerdeno-Tarraga A.-M."/>
            <person name="Chillingworth T."/>
            <person name="Cronin A."/>
            <person name="Davies R.M."/>
            <person name="Davis P."/>
            <person name="Dougan G."/>
            <person name="Feltwell T."/>
            <person name="Hamlin N."/>
            <person name="Holroyd S."/>
            <person name="Jagels K."/>
            <person name="Karlyshev A.V."/>
            <person name="Leather S."/>
            <person name="Moule S."/>
            <person name="Oyston P.C.F."/>
            <person name="Quail M.A."/>
            <person name="Rutherford K.M."/>
            <person name="Simmonds M."/>
            <person name="Skelton J."/>
            <person name="Stevens K."/>
            <person name="Whitehead S."/>
            <person name="Barrell B.G."/>
        </authorList>
    </citation>
    <scope>NUCLEOTIDE SEQUENCE [LARGE SCALE GENOMIC DNA]</scope>
    <source>
        <strain>CO-92 / Biovar Orientalis</strain>
    </source>
</reference>
<reference key="2">
    <citation type="journal article" date="2002" name="J. Bacteriol.">
        <title>Genome sequence of Yersinia pestis KIM.</title>
        <authorList>
            <person name="Deng W."/>
            <person name="Burland V."/>
            <person name="Plunkett G. III"/>
            <person name="Boutin A."/>
            <person name="Mayhew G.F."/>
            <person name="Liss P."/>
            <person name="Perna N.T."/>
            <person name="Rose D.J."/>
            <person name="Mau B."/>
            <person name="Zhou S."/>
            <person name="Schwartz D.C."/>
            <person name="Fetherston J.D."/>
            <person name="Lindler L.E."/>
            <person name="Brubaker R.R."/>
            <person name="Plano G.V."/>
            <person name="Straley S.C."/>
            <person name="McDonough K.A."/>
            <person name="Nilles M.L."/>
            <person name="Matson J.S."/>
            <person name="Blattner F.R."/>
            <person name="Perry R.D."/>
        </authorList>
    </citation>
    <scope>NUCLEOTIDE SEQUENCE [LARGE SCALE GENOMIC DNA]</scope>
    <source>
        <strain>KIM10+ / Biovar Mediaevalis</strain>
    </source>
</reference>
<reference key="3">
    <citation type="journal article" date="2004" name="DNA Res.">
        <title>Complete genome sequence of Yersinia pestis strain 91001, an isolate avirulent to humans.</title>
        <authorList>
            <person name="Song Y."/>
            <person name="Tong Z."/>
            <person name="Wang J."/>
            <person name="Wang L."/>
            <person name="Guo Z."/>
            <person name="Han Y."/>
            <person name="Zhang J."/>
            <person name="Pei D."/>
            <person name="Zhou D."/>
            <person name="Qin H."/>
            <person name="Pang X."/>
            <person name="Han Y."/>
            <person name="Zhai J."/>
            <person name="Li M."/>
            <person name="Cui B."/>
            <person name="Qi Z."/>
            <person name="Jin L."/>
            <person name="Dai R."/>
            <person name="Chen F."/>
            <person name="Li S."/>
            <person name="Ye C."/>
            <person name="Du Z."/>
            <person name="Lin W."/>
            <person name="Wang J."/>
            <person name="Yu J."/>
            <person name="Yang H."/>
            <person name="Wang J."/>
            <person name="Huang P."/>
            <person name="Yang R."/>
        </authorList>
    </citation>
    <scope>NUCLEOTIDE SEQUENCE [LARGE SCALE GENOMIC DNA]</scope>
    <source>
        <strain>91001 / Biovar Mediaevalis</strain>
    </source>
</reference>
<comment type="function">
    <text evidence="1">Pyrophosphatase that catalyzes the hydrolysis of nucleoside triphosphates to their monophosphate derivatives, with a high preference for the non-canonical purine nucleotides XTP (xanthosine triphosphate), dITP (deoxyinosine triphosphate) and ITP. Seems to function as a house-cleaning enzyme that removes non-canonical purine nucleotides from the nucleotide pool, thus preventing their incorporation into DNA/RNA and avoiding chromosomal lesions.</text>
</comment>
<comment type="catalytic activity">
    <reaction evidence="1">
        <text>XTP + H2O = XMP + diphosphate + H(+)</text>
        <dbReference type="Rhea" id="RHEA:28610"/>
        <dbReference type="ChEBI" id="CHEBI:15377"/>
        <dbReference type="ChEBI" id="CHEBI:15378"/>
        <dbReference type="ChEBI" id="CHEBI:33019"/>
        <dbReference type="ChEBI" id="CHEBI:57464"/>
        <dbReference type="ChEBI" id="CHEBI:61314"/>
        <dbReference type="EC" id="3.6.1.66"/>
    </reaction>
</comment>
<comment type="catalytic activity">
    <reaction evidence="1">
        <text>dITP + H2O = dIMP + diphosphate + H(+)</text>
        <dbReference type="Rhea" id="RHEA:28342"/>
        <dbReference type="ChEBI" id="CHEBI:15377"/>
        <dbReference type="ChEBI" id="CHEBI:15378"/>
        <dbReference type="ChEBI" id="CHEBI:33019"/>
        <dbReference type="ChEBI" id="CHEBI:61194"/>
        <dbReference type="ChEBI" id="CHEBI:61382"/>
        <dbReference type="EC" id="3.6.1.66"/>
    </reaction>
</comment>
<comment type="catalytic activity">
    <reaction evidence="1">
        <text>ITP + H2O = IMP + diphosphate + H(+)</text>
        <dbReference type="Rhea" id="RHEA:29399"/>
        <dbReference type="ChEBI" id="CHEBI:15377"/>
        <dbReference type="ChEBI" id="CHEBI:15378"/>
        <dbReference type="ChEBI" id="CHEBI:33019"/>
        <dbReference type="ChEBI" id="CHEBI:58053"/>
        <dbReference type="ChEBI" id="CHEBI:61402"/>
        <dbReference type="EC" id="3.6.1.66"/>
    </reaction>
</comment>
<comment type="cofactor">
    <cofactor evidence="1">
        <name>Mg(2+)</name>
        <dbReference type="ChEBI" id="CHEBI:18420"/>
    </cofactor>
    <text evidence="1">Binds 1 Mg(2+) ion per subunit.</text>
</comment>
<comment type="subunit">
    <text evidence="1">Homodimer.</text>
</comment>
<comment type="similarity">
    <text evidence="1">Belongs to the HAM1 NTPase family.</text>
</comment>
<comment type="sequence caution" evidence="2">
    <conflict type="erroneous initiation">
        <sequence resource="EMBL-CDS" id="AAM86881"/>
    </conflict>
</comment>
<comment type="sequence caution" evidence="2">
    <conflict type="erroneous initiation">
        <sequence resource="EMBL-CDS" id="AAS63651"/>
    </conflict>
</comment>
<proteinExistence type="inferred from homology"/>
<accession>Q8ZHF4</accession>
<accession>Q0WI96</accession>
<dbReference type="EC" id="3.6.1.66" evidence="1"/>
<dbReference type="EMBL" id="AL590842">
    <property type="protein sequence ID" value="CAL19611.1"/>
    <property type="molecule type" value="Genomic_DNA"/>
</dbReference>
<dbReference type="EMBL" id="AE009952">
    <property type="protein sequence ID" value="AAM86881.1"/>
    <property type="status" value="ALT_INIT"/>
    <property type="molecule type" value="Genomic_DNA"/>
</dbReference>
<dbReference type="EMBL" id="AE017042">
    <property type="protein sequence ID" value="AAS63651.1"/>
    <property type="status" value="ALT_INIT"/>
    <property type="molecule type" value="Genomic_DNA"/>
</dbReference>
<dbReference type="PIR" id="AI0115">
    <property type="entry name" value="AI0115"/>
</dbReference>
<dbReference type="RefSeq" id="WP_002215614.1">
    <property type="nucleotide sequence ID" value="NZ_WUCM01000030.1"/>
</dbReference>
<dbReference type="RefSeq" id="YP_002345992.1">
    <property type="nucleotide sequence ID" value="NC_003143.1"/>
</dbReference>
<dbReference type="SMR" id="Q8ZHF4"/>
<dbReference type="IntAct" id="Q8ZHF4">
    <property type="interactions" value="1"/>
</dbReference>
<dbReference type="STRING" id="214092.YPO0945"/>
<dbReference type="PaxDb" id="214092-YPO0945"/>
<dbReference type="EnsemblBacteria" id="AAS63651">
    <property type="protein sequence ID" value="AAS63651"/>
    <property type="gene ID" value="YP_3497"/>
</dbReference>
<dbReference type="KEGG" id="ype:YPO0945"/>
<dbReference type="KEGG" id="ypk:y3331"/>
<dbReference type="KEGG" id="ypm:YP_3497"/>
<dbReference type="PATRIC" id="fig|214092.21.peg.1223"/>
<dbReference type="eggNOG" id="COG0127">
    <property type="taxonomic scope" value="Bacteria"/>
</dbReference>
<dbReference type="HOGENOM" id="CLU_082080_0_3_6"/>
<dbReference type="OrthoDB" id="9807456at2"/>
<dbReference type="Proteomes" id="UP000000815">
    <property type="component" value="Chromosome"/>
</dbReference>
<dbReference type="Proteomes" id="UP000001019">
    <property type="component" value="Chromosome"/>
</dbReference>
<dbReference type="Proteomes" id="UP000002490">
    <property type="component" value="Chromosome"/>
</dbReference>
<dbReference type="GO" id="GO:0005737">
    <property type="term" value="C:cytoplasm"/>
    <property type="evidence" value="ECO:0000318"/>
    <property type="project" value="GO_Central"/>
</dbReference>
<dbReference type="GO" id="GO:0005829">
    <property type="term" value="C:cytosol"/>
    <property type="evidence" value="ECO:0000318"/>
    <property type="project" value="GO_Central"/>
</dbReference>
<dbReference type="GO" id="GO:0035870">
    <property type="term" value="F:dITP diphosphatase activity"/>
    <property type="evidence" value="ECO:0007669"/>
    <property type="project" value="RHEA"/>
</dbReference>
<dbReference type="GO" id="GO:0036220">
    <property type="term" value="F:ITP diphosphatase activity"/>
    <property type="evidence" value="ECO:0007669"/>
    <property type="project" value="UniProtKB-EC"/>
</dbReference>
<dbReference type="GO" id="GO:0046872">
    <property type="term" value="F:metal ion binding"/>
    <property type="evidence" value="ECO:0007669"/>
    <property type="project" value="UniProtKB-KW"/>
</dbReference>
<dbReference type="GO" id="GO:0047429">
    <property type="term" value="F:nucleoside triphosphate diphosphatase activity"/>
    <property type="evidence" value="ECO:0000318"/>
    <property type="project" value="GO_Central"/>
</dbReference>
<dbReference type="GO" id="GO:0000166">
    <property type="term" value="F:nucleotide binding"/>
    <property type="evidence" value="ECO:0007669"/>
    <property type="project" value="UniProtKB-KW"/>
</dbReference>
<dbReference type="GO" id="GO:0017111">
    <property type="term" value="F:ribonucleoside triphosphate phosphatase activity"/>
    <property type="evidence" value="ECO:0007669"/>
    <property type="project" value="InterPro"/>
</dbReference>
<dbReference type="GO" id="GO:0036222">
    <property type="term" value="F:XTP diphosphatase activity"/>
    <property type="evidence" value="ECO:0007669"/>
    <property type="project" value="RHEA"/>
</dbReference>
<dbReference type="GO" id="GO:0009143">
    <property type="term" value="P:nucleoside triphosphate catabolic process"/>
    <property type="evidence" value="ECO:0000318"/>
    <property type="project" value="GO_Central"/>
</dbReference>
<dbReference type="GO" id="GO:0009117">
    <property type="term" value="P:nucleotide metabolic process"/>
    <property type="evidence" value="ECO:0007669"/>
    <property type="project" value="UniProtKB-KW"/>
</dbReference>
<dbReference type="GO" id="GO:0009146">
    <property type="term" value="P:purine nucleoside triphosphate catabolic process"/>
    <property type="evidence" value="ECO:0007669"/>
    <property type="project" value="UniProtKB-UniRule"/>
</dbReference>
<dbReference type="CDD" id="cd00515">
    <property type="entry name" value="HAM1"/>
    <property type="match status" value="1"/>
</dbReference>
<dbReference type="FunFam" id="3.90.950.10:FF:000001">
    <property type="entry name" value="dITP/XTP pyrophosphatase"/>
    <property type="match status" value="1"/>
</dbReference>
<dbReference type="Gene3D" id="3.90.950.10">
    <property type="match status" value="1"/>
</dbReference>
<dbReference type="HAMAP" id="MF_01405">
    <property type="entry name" value="Non_canon_purine_NTPase"/>
    <property type="match status" value="1"/>
</dbReference>
<dbReference type="InterPro" id="IPR020922">
    <property type="entry name" value="dITP/XTP_pyrophosphatase"/>
</dbReference>
<dbReference type="InterPro" id="IPR029001">
    <property type="entry name" value="ITPase-like_fam"/>
</dbReference>
<dbReference type="InterPro" id="IPR002637">
    <property type="entry name" value="RdgB/HAM1"/>
</dbReference>
<dbReference type="NCBIfam" id="NF011397">
    <property type="entry name" value="PRK14822.1"/>
    <property type="match status" value="1"/>
</dbReference>
<dbReference type="NCBIfam" id="TIGR00042">
    <property type="entry name" value="RdgB/HAM1 family non-canonical purine NTP pyrophosphatase"/>
    <property type="match status" value="1"/>
</dbReference>
<dbReference type="PANTHER" id="PTHR11067:SF9">
    <property type="entry name" value="INOSINE TRIPHOSPHATE PYROPHOSPHATASE"/>
    <property type="match status" value="1"/>
</dbReference>
<dbReference type="PANTHER" id="PTHR11067">
    <property type="entry name" value="INOSINE TRIPHOSPHATE PYROPHOSPHATASE/HAM1 PROTEIN"/>
    <property type="match status" value="1"/>
</dbReference>
<dbReference type="Pfam" id="PF01725">
    <property type="entry name" value="Ham1p_like"/>
    <property type="match status" value="1"/>
</dbReference>
<dbReference type="SUPFAM" id="SSF52972">
    <property type="entry name" value="ITPase-like"/>
    <property type="match status" value="1"/>
</dbReference>
<keyword id="KW-0378">Hydrolase</keyword>
<keyword id="KW-0460">Magnesium</keyword>
<keyword id="KW-0479">Metal-binding</keyword>
<keyword id="KW-0546">Nucleotide metabolism</keyword>
<keyword id="KW-0547">Nucleotide-binding</keyword>
<keyword id="KW-1185">Reference proteome</keyword>
<sequence length="197" mass="20906">MQKIVLATGNPGKVRELANLLADFGLDVVAQTELGVESAEETGLTFIENAILKARHAAQTTGLPAIADDSGLAVDALGGAPGIYSARYAGTDASDQENLEKLLVALQNVPDEKRGAQFHCVLVYMRHAEDPTPLVFHGQWPGVIAHQPAGAAGFGYDPIFYVPALGKTAAELTREEKHAVSHRGQALKLMLDALRDA</sequence>
<evidence type="ECO:0000255" key="1">
    <source>
        <dbReference type="HAMAP-Rule" id="MF_01405"/>
    </source>
</evidence>
<evidence type="ECO:0000305" key="2"/>
<organism>
    <name type="scientific">Yersinia pestis</name>
    <dbReference type="NCBI Taxonomy" id="632"/>
    <lineage>
        <taxon>Bacteria</taxon>
        <taxon>Pseudomonadati</taxon>
        <taxon>Pseudomonadota</taxon>
        <taxon>Gammaproteobacteria</taxon>
        <taxon>Enterobacterales</taxon>
        <taxon>Yersiniaceae</taxon>
        <taxon>Yersinia</taxon>
    </lineage>
</organism>
<name>IXTPA_YERPE</name>